<dbReference type="EMBL" id="CP000038">
    <property type="protein sequence ID" value="AAZ87886.1"/>
    <property type="status" value="ALT_INIT"/>
    <property type="molecule type" value="Genomic_DNA"/>
</dbReference>
<dbReference type="RefSeq" id="WP_000726974.1">
    <property type="nucleotide sequence ID" value="NC_007384.1"/>
</dbReference>
<dbReference type="KEGG" id="ssn:SSON_1162"/>
<dbReference type="HOGENOM" id="CLU_164687_0_0_6"/>
<dbReference type="Proteomes" id="UP000002529">
    <property type="component" value="Chromosome"/>
</dbReference>
<dbReference type="HAMAP" id="MF_01455">
    <property type="entry name" value="UPF0757"/>
    <property type="match status" value="1"/>
</dbReference>
<dbReference type="InterPro" id="IPR025693">
    <property type="entry name" value="Gly-zipper_OmpA-like_dom"/>
</dbReference>
<dbReference type="InterPro" id="IPR027367">
    <property type="entry name" value="Gly-zipper_YMGG"/>
</dbReference>
<dbReference type="InterPro" id="IPR022833">
    <property type="entry name" value="UPF0757_YmgG"/>
</dbReference>
<dbReference type="Pfam" id="PF13436">
    <property type="entry name" value="Gly-zipper_OmpA"/>
    <property type="match status" value="1"/>
</dbReference>
<dbReference type="Pfam" id="PF13441">
    <property type="entry name" value="Gly-zipper_YMGG"/>
    <property type="match status" value="1"/>
</dbReference>
<evidence type="ECO:0000255" key="1">
    <source>
        <dbReference type="HAMAP-Rule" id="MF_01455"/>
    </source>
</evidence>
<evidence type="ECO:0000305" key="2"/>
<accession>Q3Z2X6</accession>
<reference key="1">
    <citation type="journal article" date="2005" name="Nucleic Acids Res.">
        <title>Genome dynamics and diversity of Shigella species, the etiologic agents of bacillary dysentery.</title>
        <authorList>
            <person name="Yang F."/>
            <person name="Yang J."/>
            <person name="Zhang X."/>
            <person name="Chen L."/>
            <person name="Jiang Y."/>
            <person name="Yan Y."/>
            <person name="Tang X."/>
            <person name="Wang J."/>
            <person name="Xiong Z."/>
            <person name="Dong J."/>
            <person name="Xue Y."/>
            <person name="Zhu Y."/>
            <person name="Xu X."/>
            <person name="Sun L."/>
            <person name="Chen S."/>
            <person name="Nie H."/>
            <person name="Peng J."/>
            <person name="Xu J."/>
            <person name="Wang Y."/>
            <person name="Yuan Z."/>
            <person name="Wen Y."/>
            <person name="Yao Z."/>
            <person name="Shen Y."/>
            <person name="Qiang B."/>
            <person name="Hou Y."/>
            <person name="Yu J."/>
            <person name="Jin Q."/>
        </authorList>
    </citation>
    <scope>NUCLEOTIDE SEQUENCE [LARGE SCALE GENOMIC DNA]</scope>
    <source>
        <strain>Ss046</strain>
    </source>
</reference>
<proteinExistence type="inferred from homology"/>
<gene>
    <name evidence="1" type="primary">ymgG</name>
    <name type="ordered locus">SSON_1162</name>
</gene>
<name>YMGG_SHISS</name>
<keyword id="KW-1185">Reference proteome</keyword>
<protein>
    <recommendedName>
        <fullName evidence="1">UPF0757 protein YmgG</fullName>
    </recommendedName>
</protein>
<feature type="chain" id="PRO_0000252226" description="UPF0757 protein YmgG">
    <location>
        <begin position="1"/>
        <end position="114"/>
    </location>
</feature>
<comment type="similarity">
    <text evidence="1">Belongs to the UPF0757 family.</text>
</comment>
<comment type="sequence caution" evidence="2">
    <conflict type="erroneous initiation">
        <sequence resource="EMBL-CDS" id="AAZ87886"/>
    </conflict>
</comment>
<sequence length="114" mass="10807">MKKKILAFGLISALFCSTPAMADMNRTTKGALLGAGVGLLTGNGVNGVLKGAAVGAGVGAVTEKGRDGKNARKGAKVGAAVGAVTGVLTGNGLEGAIKGAVIGGTGGAILGKMK</sequence>
<organism>
    <name type="scientific">Shigella sonnei (strain Ss046)</name>
    <dbReference type="NCBI Taxonomy" id="300269"/>
    <lineage>
        <taxon>Bacteria</taxon>
        <taxon>Pseudomonadati</taxon>
        <taxon>Pseudomonadota</taxon>
        <taxon>Gammaproteobacteria</taxon>
        <taxon>Enterobacterales</taxon>
        <taxon>Enterobacteriaceae</taxon>
        <taxon>Shigella</taxon>
    </lineage>
</organism>